<proteinExistence type="inferred from homology"/>
<comment type="function">
    <text evidence="1">Catalyzes the transformation of pimelate into pimeloyl-CoA with concomitant hydrolysis of ATP to AMP.</text>
</comment>
<comment type="catalytic activity">
    <reaction evidence="1">
        <text>heptanedioate + ATP + CoA = 6-carboxyhexanoyl-CoA + AMP + diphosphate</text>
        <dbReference type="Rhea" id="RHEA:14781"/>
        <dbReference type="ChEBI" id="CHEBI:30616"/>
        <dbReference type="ChEBI" id="CHEBI:33019"/>
        <dbReference type="ChEBI" id="CHEBI:36165"/>
        <dbReference type="ChEBI" id="CHEBI:57287"/>
        <dbReference type="ChEBI" id="CHEBI:57360"/>
        <dbReference type="ChEBI" id="CHEBI:456215"/>
        <dbReference type="EC" id="6.2.1.14"/>
    </reaction>
</comment>
<comment type="cofactor">
    <cofactor evidence="1">
        <name>Mg(2+)</name>
        <dbReference type="ChEBI" id="CHEBI:18420"/>
    </cofactor>
</comment>
<comment type="pathway">
    <text evidence="1">Metabolic intermediate metabolism; pimeloyl-CoA biosynthesis; pimeloyl-CoA from pimelate: step 1/1.</text>
</comment>
<comment type="subunit">
    <text evidence="1">Homodimer.</text>
</comment>
<comment type="similarity">
    <text evidence="1">Belongs to the BioW family.</text>
</comment>
<feature type="chain" id="PRO_0000191024" description="6-carboxyhexanoate--CoA ligase">
    <location>
        <begin position="1"/>
        <end position="228"/>
    </location>
</feature>
<protein>
    <recommendedName>
        <fullName evidence="1">6-carboxyhexanoate--CoA ligase</fullName>
        <ecNumber evidence="1">6.2.1.14</ecNumber>
    </recommendedName>
    <alternativeName>
        <fullName evidence="1">Pimeloyl-CoA synthase</fullName>
    </alternativeName>
</protein>
<dbReference type="EC" id="6.2.1.14" evidence="1"/>
<dbReference type="EMBL" id="CP000029">
    <property type="protein sequence ID" value="AAW53234.1"/>
    <property type="molecule type" value="Genomic_DNA"/>
</dbReference>
<dbReference type="RefSeq" id="WP_002467604.1">
    <property type="nucleotide sequence ID" value="NC_002976.3"/>
</dbReference>
<dbReference type="SMR" id="Q5HKF3"/>
<dbReference type="STRING" id="176279.SERP2393"/>
<dbReference type="KEGG" id="ser:SERP2393"/>
<dbReference type="eggNOG" id="COG1424">
    <property type="taxonomic scope" value="Bacteria"/>
</dbReference>
<dbReference type="HOGENOM" id="CLU_076858_0_0_9"/>
<dbReference type="UniPathway" id="UPA00999">
    <property type="reaction ID" value="UER00351"/>
</dbReference>
<dbReference type="Proteomes" id="UP000000531">
    <property type="component" value="Chromosome"/>
</dbReference>
<dbReference type="GO" id="GO:0042410">
    <property type="term" value="F:6-carboxyhexanoate-CoA ligase activity"/>
    <property type="evidence" value="ECO:0007669"/>
    <property type="project" value="UniProtKB-UniRule"/>
</dbReference>
<dbReference type="GO" id="GO:0005524">
    <property type="term" value="F:ATP binding"/>
    <property type="evidence" value="ECO:0007669"/>
    <property type="project" value="UniProtKB-KW"/>
</dbReference>
<dbReference type="GO" id="GO:0000287">
    <property type="term" value="F:magnesium ion binding"/>
    <property type="evidence" value="ECO:0007669"/>
    <property type="project" value="UniProtKB-UniRule"/>
</dbReference>
<dbReference type="GO" id="GO:0009102">
    <property type="term" value="P:biotin biosynthetic process"/>
    <property type="evidence" value="ECO:0007669"/>
    <property type="project" value="UniProtKB-UniRule"/>
</dbReference>
<dbReference type="HAMAP" id="MF_00668">
    <property type="entry name" value="BioW"/>
    <property type="match status" value="1"/>
</dbReference>
<dbReference type="InterPro" id="IPR005499">
    <property type="entry name" value="BioW"/>
</dbReference>
<dbReference type="NCBIfam" id="NF002360">
    <property type="entry name" value="PRK01322.1"/>
    <property type="match status" value="1"/>
</dbReference>
<dbReference type="Pfam" id="PF03744">
    <property type="entry name" value="BioW"/>
    <property type="match status" value="1"/>
</dbReference>
<gene>
    <name evidence="1" type="primary">bioW</name>
    <name type="ordered locus">SERP2393</name>
</gene>
<organism>
    <name type="scientific">Staphylococcus epidermidis (strain ATCC 35984 / DSM 28319 / BCRC 17069 / CCUG 31568 / BM 3577 / RP62A)</name>
    <dbReference type="NCBI Taxonomy" id="176279"/>
    <lineage>
        <taxon>Bacteria</taxon>
        <taxon>Bacillati</taxon>
        <taxon>Bacillota</taxon>
        <taxon>Bacilli</taxon>
        <taxon>Bacillales</taxon>
        <taxon>Staphylococcaceae</taxon>
        <taxon>Staphylococcus</taxon>
    </lineage>
</organism>
<keyword id="KW-0067">ATP-binding</keyword>
<keyword id="KW-0093">Biotin biosynthesis</keyword>
<keyword id="KW-0436">Ligase</keyword>
<keyword id="KW-0460">Magnesium</keyword>
<keyword id="KW-0547">Nucleotide-binding</keyword>
<keyword id="KW-1185">Reference proteome</keyword>
<accession>Q5HKF3</accession>
<name>BIOW_STAEQ</name>
<sequence>MYSIKMRASHEDIHISGAETMCEFEDLENYLKKYFNKAFNHENGNIDFLNLKIEKVKAPIQTLVALPVVENLNDTLTQLAKQTGVSEYALNKGLEFIKNDITYTGAIILSAQTGQRLDSTEQRGIRVTQLAFKTCKCNGEISERVKDARALATCINAFEGVKAELCVSDDLHYTTGYFASPKLGYRRIFNIKEKGTRHGGRIIFVDEGINLNAYVSFLETVPKEIIEK</sequence>
<evidence type="ECO:0000255" key="1">
    <source>
        <dbReference type="HAMAP-Rule" id="MF_00668"/>
    </source>
</evidence>
<reference key="1">
    <citation type="journal article" date="2005" name="J. Bacteriol.">
        <title>Insights on evolution of virulence and resistance from the complete genome analysis of an early methicillin-resistant Staphylococcus aureus strain and a biofilm-producing methicillin-resistant Staphylococcus epidermidis strain.</title>
        <authorList>
            <person name="Gill S.R."/>
            <person name="Fouts D.E."/>
            <person name="Archer G.L."/>
            <person name="Mongodin E.F."/>
            <person name="DeBoy R.T."/>
            <person name="Ravel J."/>
            <person name="Paulsen I.T."/>
            <person name="Kolonay J.F."/>
            <person name="Brinkac L.M."/>
            <person name="Beanan M.J."/>
            <person name="Dodson R.J."/>
            <person name="Daugherty S.C."/>
            <person name="Madupu R."/>
            <person name="Angiuoli S.V."/>
            <person name="Durkin A.S."/>
            <person name="Haft D.H."/>
            <person name="Vamathevan J.J."/>
            <person name="Khouri H."/>
            <person name="Utterback T.R."/>
            <person name="Lee C."/>
            <person name="Dimitrov G."/>
            <person name="Jiang L."/>
            <person name="Qin H."/>
            <person name="Weidman J."/>
            <person name="Tran K."/>
            <person name="Kang K.H."/>
            <person name="Hance I.R."/>
            <person name="Nelson K.E."/>
            <person name="Fraser C.M."/>
        </authorList>
    </citation>
    <scope>NUCLEOTIDE SEQUENCE [LARGE SCALE GENOMIC DNA]</scope>
    <source>
        <strain>ATCC 35984 / DSM 28319 / BCRC 17069 / CCUG 31568 / BM 3577 / RP62A</strain>
    </source>
</reference>